<accession>Q3IP66</accession>
<reference key="1">
    <citation type="journal article" date="2005" name="Genome Res.">
        <title>Living with two extremes: conclusions from the genome sequence of Natronomonas pharaonis.</title>
        <authorList>
            <person name="Falb M."/>
            <person name="Pfeiffer F."/>
            <person name="Palm P."/>
            <person name="Rodewald K."/>
            <person name="Hickmann V."/>
            <person name="Tittor J."/>
            <person name="Oesterhelt D."/>
        </authorList>
    </citation>
    <scope>NUCLEOTIDE SEQUENCE [LARGE SCALE GENOMIC DNA]</scope>
    <source>
        <strain>ATCC 35678 / DSM 2160 / CIP 103997 / JCM 8858 / NBRC 14720 / NCIMB 2260 / Gabara</strain>
    </source>
</reference>
<organism>
    <name type="scientific">Natronomonas pharaonis (strain ATCC 35678 / DSM 2160 / CIP 103997 / JCM 8858 / NBRC 14720 / NCIMB 2260 / Gabara)</name>
    <name type="common">Halobacterium pharaonis</name>
    <dbReference type="NCBI Taxonomy" id="348780"/>
    <lineage>
        <taxon>Archaea</taxon>
        <taxon>Methanobacteriati</taxon>
        <taxon>Methanobacteriota</taxon>
        <taxon>Stenosarchaea group</taxon>
        <taxon>Halobacteria</taxon>
        <taxon>Halobacteriales</taxon>
        <taxon>Haloarculaceae</taxon>
        <taxon>Natronomonas</taxon>
    </lineage>
</organism>
<feature type="chain" id="PRO_0000225641" description="DNA primase small subunit PriS">
    <location>
        <begin position="1"/>
        <end position="393"/>
    </location>
</feature>
<feature type="active site" evidence="1">
    <location>
        <position position="100"/>
    </location>
</feature>
<feature type="active site" evidence="1">
    <location>
        <position position="102"/>
    </location>
</feature>
<feature type="active site" evidence="1">
    <location>
        <position position="296"/>
    </location>
</feature>
<proteinExistence type="inferred from homology"/>
<protein>
    <recommendedName>
        <fullName evidence="1">DNA primase small subunit PriS</fullName>
        <ecNumber evidence="1">2.7.7.-</ecNumber>
    </recommendedName>
</protein>
<name>PRIS_NATPD</name>
<keyword id="KW-0235">DNA replication</keyword>
<keyword id="KW-0240">DNA-directed RNA polymerase</keyword>
<keyword id="KW-0460">Magnesium</keyword>
<keyword id="KW-0464">Manganese</keyword>
<keyword id="KW-0479">Metal-binding</keyword>
<keyword id="KW-0548">Nucleotidyltransferase</keyword>
<keyword id="KW-0639">Primosome</keyword>
<keyword id="KW-1185">Reference proteome</keyword>
<keyword id="KW-0804">Transcription</keyword>
<keyword id="KW-0808">Transferase</keyword>
<dbReference type="EC" id="2.7.7.-" evidence="1"/>
<dbReference type="EMBL" id="CR936257">
    <property type="protein sequence ID" value="CAI50086.1"/>
    <property type="molecule type" value="Genomic_DNA"/>
</dbReference>
<dbReference type="RefSeq" id="WP_011323702.1">
    <property type="nucleotide sequence ID" value="NC_007426.1"/>
</dbReference>
<dbReference type="SMR" id="Q3IP66"/>
<dbReference type="STRING" id="348780.NP_3990A"/>
<dbReference type="EnsemblBacteria" id="CAI50086">
    <property type="protein sequence ID" value="CAI50086"/>
    <property type="gene ID" value="NP_3990A"/>
</dbReference>
<dbReference type="GeneID" id="3703050"/>
<dbReference type="KEGG" id="nph:NP_3990A"/>
<dbReference type="eggNOG" id="arCOG04110">
    <property type="taxonomic scope" value="Archaea"/>
</dbReference>
<dbReference type="HOGENOM" id="CLU_056123_1_0_2"/>
<dbReference type="OrthoDB" id="31125at2157"/>
<dbReference type="Proteomes" id="UP000002698">
    <property type="component" value="Chromosome"/>
</dbReference>
<dbReference type="GO" id="GO:0000428">
    <property type="term" value="C:DNA-directed RNA polymerase complex"/>
    <property type="evidence" value="ECO:0007669"/>
    <property type="project" value="UniProtKB-KW"/>
</dbReference>
<dbReference type="GO" id="GO:1990077">
    <property type="term" value="C:primosome complex"/>
    <property type="evidence" value="ECO:0007669"/>
    <property type="project" value="UniProtKB-KW"/>
</dbReference>
<dbReference type="GO" id="GO:0003899">
    <property type="term" value="F:DNA-directed RNA polymerase activity"/>
    <property type="evidence" value="ECO:0007669"/>
    <property type="project" value="InterPro"/>
</dbReference>
<dbReference type="GO" id="GO:0046872">
    <property type="term" value="F:metal ion binding"/>
    <property type="evidence" value="ECO:0007669"/>
    <property type="project" value="UniProtKB-KW"/>
</dbReference>
<dbReference type="GO" id="GO:0006269">
    <property type="term" value="P:DNA replication, synthesis of primer"/>
    <property type="evidence" value="ECO:0007669"/>
    <property type="project" value="UniProtKB-UniRule"/>
</dbReference>
<dbReference type="CDD" id="cd04860">
    <property type="entry name" value="AE_Prim_S"/>
    <property type="match status" value="1"/>
</dbReference>
<dbReference type="Gene3D" id="3.90.920.10">
    <property type="entry name" value="DNA primase, PRIM domain"/>
    <property type="match status" value="1"/>
</dbReference>
<dbReference type="HAMAP" id="MF_00700">
    <property type="entry name" value="DNA_primase_sml_arc"/>
    <property type="match status" value="1"/>
</dbReference>
<dbReference type="InterPro" id="IPR002755">
    <property type="entry name" value="DNA_primase_S"/>
</dbReference>
<dbReference type="InterPro" id="IPR014052">
    <property type="entry name" value="DNA_primase_ssu_euk/arc"/>
</dbReference>
<dbReference type="InterPro" id="IPR023639">
    <property type="entry name" value="DNA_primase_ssu_PriS"/>
</dbReference>
<dbReference type="NCBIfam" id="NF001639">
    <property type="entry name" value="PRK00419.1-1"/>
    <property type="match status" value="1"/>
</dbReference>
<dbReference type="PANTHER" id="PTHR10536">
    <property type="entry name" value="DNA PRIMASE SMALL SUBUNIT"/>
    <property type="match status" value="1"/>
</dbReference>
<dbReference type="Pfam" id="PF01896">
    <property type="entry name" value="DNA_primase_S"/>
    <property type="match status" value="1"/>
</dbReference>
<dbReference type="SUPFAM" id="SSF56747">
    <property type="entry name" value="Prim-pol domain"/>
    <property type="match status" value="1"/>
</dbReference>
<evidence type="ECO:0000255" key="1">
    <source>
        <dbReference type="HAMAP-Rule" id="MF_00700"/>
    </source>
</evidence>
<gene>
    <name evidence="1" type="primary">priS</name>
    <name type="synonym">priA</name>
    <name type="ordered locus">NP_3990A</name>
</gene>
<sequence length="393" mass="42795">MNGRTREYLKGRFGDHYRRASLSPPPAANEREWGYITWGDGGTTMVRHHSYLDVTGGGDLGGFLAGERPRHVYFSAGRYDDPGASSMGQKGWRGSDLVFDLDADHLPGIDPSETSYAAMLEACKGALSRLLDLLVEDFGFEPLAVVFSGGRGYHVHVRRDDVLELDRTARREIVEYVLGEGLDFDDIVSTQAVAGSAGRSSPAQKRTLPDGGWAGRVRTRLTTLFDEVLTMEEAAALDRLREFDGIGEGKAKAALTAARNNREELTKGNVDVHPAVYSIARELFETVVEAESAPIDEPVTTDINRLIRLPGSLHGGTGLEVQHLDRDAIDAFDPLSDAVPETFVGNEIAIYTQEPTTVELRGESFRLSEGVSSVPEYVGVFAMARGYASKAGE</sequence>
<comment type="function">
    <text evidence="1">Catalytic subunit of DNA primase, an RNA polymerase that catalyzes the synthesis of short RNA molecules used as primers for DNA polymerase during DNA replication. The small subunit contains the primase catalytic core and has DNA synthesis activity on its own. Binding to the large subunit stabilizes and modulates the activity, increasing the rate of DNA synthesis while decreasing the length of the DNA fragments, and conferring RNA synthesis capability. The DNA polymerase activity may enable DNA primase to also catalyze primer extension after primer synthesis. May also play a role in DNA repair.</text>
</comment>
<comment type="cofactor">
    <cofactor evidence="1">
        <name>Mg(2+)</name>
        <dbReference type="ChEBI" id="CHEBI:18420"/>
    </cofactor>
    <cofactor evidence="1">
        <name>Mn(2+)</name>
        <dbReference type="ChEBI" id="CHEBI:29035"/>
    </cofactor>
</comment>
<comment type="subunit">
    <text evidence="1">Heterodimer of a small subunit (PriS) and a large subunit (PriL).</text>
</comment>
<comment type="similarity">
    <text evidence="1">Belongs to the eukaryotic-type primase small subunit family.</text>
</comment>